<comment type="function">
    <text evidence="1">As part of the BORC complex may play a role in lysosomes movement and localization at the cell periphery. Associated with the cytosolic face of lysosomes, the BORC complex may recruit ARL8B and couple lysosomes to microtubule plus-end-directed kinesin motor.</text>
</comment>
<comment type="subunit">
    <text evidence="1">Component of the BLOC-one-related complex (BORC) which is composed of BLOC1S1, BLOC1S2, BORCS5, BORCS6, BORCS7, BORCS8, KXD1 and SNAPIN.</text>
</comment>
<comment type="subcellular location">
    <subcellularLocation>
        <location evidence="1">Lysosome membrane</location>
    </subcellularLocation>
</comment>
<comment type="similarity">
    <text evidence="2">Belongs to the BORCS7 family.</text>
</comment>
<proteinExistence type="evidence at protein level"/>
<protein>
    <recommendedName>
        <fullName evidence="2">BLOC-1-related complex subunit 7</fullName>
    </recommendedName>
</protein>
<sequence>MATGTPDSQARFGQSVKGLLTEKVNTCGTDVIALTKQVLKGSRSSELLGQAARNMVLQEDAILHSEDSLRKMAIITTHLQYQQEAIQKNVEQSPDLQDQLSHLLK</sequence>
<gene>
    <name evidence="3" type="primary">Borcs7</name>
</gene>
<dbReference type="EMBL" id="AK007626">
    <property type="protein sequence ID" value="BAB25145.1"/>
    <property type="molecule type" value="mRNA"/>
</dbReference>
<dbReference type="EMBL" id="AK008215">
    <property type="protein sequence ID" value="BAB25539.1"/>
    <property type="molecule type" value="mRNA"/>
</dbReference>
<dbReference type="EMBL" id="AK046524">
    <property type="protein sequence ID" value="BAC32771.1"/>
    <property type="molecule type" value="mRNA"/>
</dbReference>
<dbReference type="EMBL" id="BC027506">
    <property type="protein sequence ID" value="AAH27506.1"/>
    <property type="molecule type" value="mRNA"/>
</dbReference>
<dbReference type="CCDS" id="CCDS38011.1"/>
<dbReference type="RefSeq" id="NP_079839.1">
    <property type="nucleotide sequence ID" value="NM_025563.3"/>
</dbReference>
<dbReference type="SMR" id="Q9CRC6"/>
<dbReference type="ComplexPortal" id="CPX-5061">
    <property type="entry name" value="BORC complex"/>
</dbReference>
<dbReference type="FunCoup" id="Q9CRC6">
    <property type="interactions" value="193"/>
</dbReference>
<dbReference type="STRING" id="10090.ENSMUSP00000074447"/>
<dbReference type="iPTMnet" id="Q9CRC6"/>
<dbReference type="PhosphoSitePlus" id="Q9CRC6"/>
<dbReference type="jPOST" id="Q9CRC6"/>
<dbReference type="PaxDb" id="10090-ENSMUSP00000074447"/>
<dbReference type="PeptideAtlas" id="Q9CRC6"/>
<dbReference type="ProteomicsDB" id="273697"/>
<dbReference type="Pumba" id="Q9CRC6"/>
<dbReference type="DNASU" id="66439"/>
<dbReference type="Ensembl" id="ENSMUST00000074912.8">
    <property type="protein sequence ID" value="ENSMUSP00000074447.8"/>
    <property type="gene ID" value="ENSMUSG00000062376.8"/>
</dbReference>
<dbReference type="GeneID" id="66439"/>
<dbReference type="KEGG" id="mmu:66439"/>
<dbReference type="UCSC" id="uc008hub.1">
    <property type="organism name" value="mouse"/>
</dbReference>
<dbReference type="AGR" id="MGI:1913689"/>
<dbReference type="CTD" id="119032"/>
<dbReference type="MGI" id="MGI:1913689">
    <property type="gene designation" value="Borcs7"/>
</dbReference>
<dbReference type="VEuPathDB" id="HostDB:ENSMUSG00000062376"/>
<dbReference type="eggNOG" id="ENOG502S2QS">
    <property type="taxonomic scope" value="Eukaryota"/>
</dbReference>
<dbReference type="GeneTree" id="ENSGT00390000015849"/>
<dbReference type="HOGENOM" id="CLU_150749_1_0_1"/>
<dbReference type="InParanoid" id="Q9CRC6"/>
<dbReference type="OMA" id="HAAKNFA"/>
<dbReference type="OrthoDB" id="5567844at2759"/>
<dbReference type="PhylomeDB" id="Q9CRC6"/>
<dbReference type="TreeFam" id="TF314767"/>
<dbReference type="BioGRID-ORCS" id="66439">
    <property type="hits" value="3 hits in 45 CRISPR screens"/>
</dbReference>
<dbReference type="ChiTaRS" id="Borcs7">
    <property type="organism name" value="mouse"/>
</dbReference>
<dbReference type="PRO" id="PR:Q9CRC6"/>
<dbReference type="Proteomes" id="UP000000589">
    <property type="component" value="Chromosome 19"/>
</dbReference>
<dbReference type="RNAct" id="Q9CRC6">
    <property type="molecule type" value="protein"/>
</dbReference>
<dbReference type="Bgee" id="ENSMUSG00000062376">
    <property type="expression patterns" value="Expressed in facial nucleus and 251 other cell types or tissues"/>
</dbReference>
<dbReference type="GO" id="GO:0099078">
    <property type="term" value="C:BORC complex"/>
    <property type="evidence" value="ECO:0000250"/>
    <property type="project" value="UniProtKB"/>
</dbReference>
<dbReference type="GO" id="GO:0098574">
    <property type="term" value="C:cytoplasmic side of lysosomal membrane"/>
    <property type="evidence" value="ECO:0000303"/>
    <property type="project" value="ComplexPortal"/>
</dbReference>
<dbReference type="GO" id="GO:0005764">
    <property type="term" value="C:lysosome"/>
    <property type="evidence" value="ECO:0000315"/>
    <property type="project" value="MGI"/>
</dbReference>
<dbReference type="GO" id="GO:0061564">
    <property type="term" value="P:axon development"/>
    <property type="evidence" value="ECO:0000315"/>
    <property type="project" value="MGI"/>
</dbReference>
<dbReference type="GO" id="GO:0032418">
    <property type="term" value="P:lysosome localization"/>
    <property type="evidence" value="ECO:0000315"/>
    <property type="project" value="MGI"/>
</dbReference>
<dbReference type="GO" id="GO:0061744">
    <property type="term" value="P:motor behavior"/>
    <property type="evidence" value="ECO:0000315"/>
    <property type="project" value="MGI"/>
</dbReference>
<dbReference type="GO" id="GO:0050905">
    <property type="term" value="P:neuromuscular process"/>
    <property type="evidence" value="ECO:0000315"/>
    <property type="project" value="MGI"/>
</dbReference>
<dbReference type="GO" id="GO:0072384">
    <property type="term" value="P:organelle transport along microtubule"/>
    <property type="evidence" value="ECO:0000303"/>
    <property type="project" value="ComplexPortal"/>
</dbReference>
<dbReference type="GO" id="GO:0051036">
    <property type="term" value="P:regulation of endosome size"/>
    <property type="evidence" value="ECO:0000303"/>
    <property type="project" value="ComplexPortal"/>
</dbReference>
<dbReference type="GO" id="GO:0062196">
    <property type="term" value="P:regulation of lysosome size"/>
    <property type="evidence" value="ECO:0000303"/>
    <property type="project" value="ComplexPortal"/>
</dbReference>
<dbReference type="GO" id="GO:0046898">
    <property type="term" value="P:response to cycloheximide"/>
    <property type="evidence" value="ECO:0000315"/>
    <property type="project" value="MGI"/>
</dbReference>
<dbReference type="GO" id="GO:0016192">
    <property type="term" value="P:vesicle-mediated transport"/>
    <property type="evidence" value="ECO:0000315"/>
    <property type="project" value="MGI"/>
</dbReference>
<dbReference type="GO" id="GO:0090659">
    <property type="term" value="P:walking behavior"/>
    <property type="evidence" value="ECO:0000315"/>
    <property type="project" value="MGI"/>
</dbReference>
<dbReference type="InterPro" id="IPR032143">
    <property type="entry name" value="BORCS7"/>
</dbReference>
<dbReference type="PANTHER" id="PTHR31397:SF3">
    <property type="entry name" value="BLOC-1-RELATED COMPLEX SUBUNIT 7"/>
    <property type="match status" value="1"/>
</dbReference>
<dbReference type="PANTHER" id="PTHR31397">
    <property type="entry name" value="BLOC-1-RELATED COMPLEX SUBUNIT 7 BORSC7"/>
    <property type="match status" value="1"/>
</dbReference>
<dbReference type="Pfam" id="PF16088">
    <property type="entry name" value="BORCS7"/>
    <property type="match status" value="1"/>
</dbReference>
<name>BORC7_MOUSE</name>
<reference key="1">
    <citation type="journal article" date="2005" name="Science">
        <title>The transcriptional landscape of the mammalian genome.</title>
        <authorList>
            <person name="Carninci P."/>
            <person name="Kasukawa T."/>
            <person name="Katayama S."/>
            <person name="Gough J."/>
            <person name="Frith M.C."/>
            <person name="Maeda N."/>
            <person name="Oyama R."/>
            <person name="Ravasi T."/>
            <person name="Lenhard B."/>
            <person name="Wells C."/>
            <person name="Kodzius R."/>
            <person name="Shimokawa K."/>
            <person name="Bajic V.B."/>
            <person name="Brenner S.E."/>
            <person name="Batalov S."/>
            <person name="Forrest A.R."/>
            <person name="Zavolan M."/>
            <person name="Davis M.J."/>
            <person name="Wilming L.G."/>
            <person name="Aidinis V."/>
            <person name="Allen J.E."/>
            <person name="Ambesi-Impiombato A."/>
            <person name="Apweiler R."/>
            <person name="Aturaliya R.N."/>
            <person name="Bailey T.L."/>
            <person name="Bansal M."/>
            <person name="Baxter L."/>
            <person name="Beisel K.W."/>
            <person name="Bersano T."/>
            <person name="Bono H."/>
            <person name="Chalk A.M."/>
            <person name="Chiu K.P."/>
            <person name="Choudhary V."/>
            <person name="Christoffels A."/>
            <person name="Clutterbuck D.R."/>
            <person name="Crowe M.L."/>
            <person name="Dalla E."/>
            <person name="Dalrymple B.P."/>
            <person name="de Bono B."/>
            <person name="Della Gatta G."/>
            <person name="di Bernardo D."/>
            <person name="Down T."/>
            <person name="Engstrom P."/>
            <person name="Fagiolini M."/>
            <person name="Faulkner G."/>
            <person name="Fletcher C.F."/>
            <person name="Fukushima T."/>
            <person name="Furuno M."/>
            <person name="Futaki S."/>
            <person name="Gariboldi M."/>
            <person name="Georgii-Hemming P."/>
            <person name="Gingeras T.R."/>
            <person name="Gojobori T."/>
            <person name="Green R.E."/>
            <person name="Gustincich S."/>
            <person name="Harbers M."/>
            <person name="Hayashi Y."/>
            <person name="Hensch T.K."/>
            <person name="Hirokawa N."/>
            <person name="Hill D."/>
            <person name="Huminiecki L."/>
            <person name="Iacono M."/>
            <person name="Ikeo K."/>
            <person name="Iwama A."/>
            <person name="Ishikawa T."/>
            <person name="Jakt M."/>
            <person name="Kanapin A."/>
            <person name="Katoh M."/>
            <person name="Kawasawa Y."/>
            <person name="Kelso J."/>
            <person name="Kitamura H."/>
            <person name="Kitano H."/>
            <person name="Kollias G."/>
            <person name="Krishnan S.P."/>
            <person name="Kruger A."/>
            <person name="Kummerfeld S.K."/>
            <person name="Kurochkin I.V."/>
            <person name="Lareau L.F."/>
            <person name="Lazarevic D."/>
            <person name="Lipovich L."/>
            <person name="Liu J."/>
            <person name="Liuni S."/>
            <person name="McWilliam S."/>
            <person name="Madan Babu M."/>
            <person name="Madera M."/>
            <person name="Marchionni L."/>
            <person name="Matsuda H."/>
            <person name="Matsuzawa S."/>
            <person name="Miki H."/>
            <person name="Mignone F."/>
            <person name="Miyake S."/>
            <person name="Morris K."/>
            <person name="Mottagui-Tabar S."/>
            <person name="Mulder N."/>
            <person name="Nakano N."/>
            <person name="Nakauchi H."/>
            <person name="Ng P."/>
            <person name="Nilsson R."/>
            <person name="Nishiguchi S."/>
            <person name="Nishikawa S."/>
            <person name="Nori F."/>
            <person name="Ohara O."/>
            <person name="Okazaki Y."/>
            <person name="Orlando V."/>
            <person name="Pang K.C."/>
            <person name="Pavan W.J."/>
            <person name="Pavesi G."/>
            <person name="Pesole G."/>
            <person name="Petrovsky N."/>
            <person name="Piazza S."/>
            <person name="Reed J."/>
            <person name="Reid J.F."/>
            <person name="Ring B.Z."/>
            <person name="Ringwald M."/>
            <person name="Rost B."/>
            <person name="Ruan Y."/>
            <person name="Salzberg S.L."/>
            <person name="Sandelin A."/>
            <person name="Schneider C."/>
            <person name="Schoenbach C."/>
            <person name="Sekiguchi K."/>
            <person name="Semple C.A."/>
            <person name="Seno S."/>
            <person name="Sessa L."/>
            <person name="Sheng Y."/>
            <person name="Shibata Y."/>
            <person name="Shimada H."/>
            <person name="Shimada K."/>
            <person name="Silva D."/>
            <person name="Sinclair B."/>
            <person name="Sperling S."/>
            <person name="Stupka E."/>
            <person name="Sugiura K."/>
            <person name="Sultana R."/>
            <person name="Takenaka Y."/>
            <person name="Taki K."/>
            <person name="Tammoja K."/>
            <person name="Tan S.L."/>
            <person name="Tang S."/>
            <person name="Taylor M.S."/>
            <person name="Tegner J."/>
            <person name="Teichmann S.A."/>
            <person name="Ueda H.R."/>
            <person name="van Nimwegen E."/>
            <person name="Verardo R."/>
            <person name="Wei C.L."/>
            <person name="Yagi K."/>
            <person name="Yamanishi H."/>
            <person name="Zabarovsky E."/>
            <person name="Zhu S."/>
            <person name="Zimmer A."/>
            <person name="Hide W."/>
            <person name="Bult C."/>
            <person name="Grimmond S.M."/>
            <person name="Teasdale R.D."/>
            <person name="Liu E.T."/>
            <person name="Brusic V."/>
            <person name="Quackenbush J."/>
            <person name="Wahlestedt C."/>
            <person name="Mattick J.S."/>
            <person name="Hume D.A."/>
            <person name="Kai C."/>
            <person name="Sasaki D."/>
            <person name="Tomaru Y."/>
            <person name="Fukuda S."/>
            <person name="Kanamori-Katayama M."/>
            <person name="Suzuki M."/>
            <person name="Aoki J."/>
            <person name="Arakawa T."/>
            <person name="Iida J."/>
            <person name="Imamura K."/>
            <person name="Itoh M."/>
            <person name="Kato T."/>
            <person name="Kawaji H."/>
            <person name="Kawagashira N."/>
            <person name="Kawashima T."/>
            <person name="Kojima M."/>
            <person name="Kondo S."/>
            <person name="Konno H."/>
            <person name="Nakano K."/>
            <person name="Ninomiya N."/>
            <person name="Nishio T."/>
            <person name="Okada M."/>
            <person name="Plessy C."/>
            <person name="Shibata K."/>
            <person name="Shiraki T."/>
            <person name="Suzuki S."/>
            <person name="Tagami M."/>
            <person name="Waki K."/>
            <person name="Watahiki A."/>
            <person name="Okamura-Oho Y."/>
            <person name="Suzuki H."/>
            <person name="Kawai J."/>
            <person name="Hayashizaki Y."/>
        </authorList>
    </citation>
    <scope>NUCLEOTIDE SEQUENCE [LARGE SCALE MRNA]</scope>
    <source>
        <strain>C57BL/6J</strain>
        <tissue>Adrenal gland</tissue>
        <tissue>Pancreas</tissue>
        <tissue>Small intestine</tissue>
    </source>
</reference>
<reference key="2">
    <citation type="journal article" date="2004" name="Genome Res.">
        <title>The status, quality, and expansion of the NIH full-length cDNA project: the Mammalian Gene Collection (MGC).</title>
        <authorList>
            <consortium name="The MGC Project Team"/>
        </authorList>
    </citation>
    <scope>NUCLEOTIDE SEQUENCE [LARGE SCALE MRNA]</scope>
    <source>
        <tissue>Mammary gland</tissue>
    </source>
</reference>
<reference key="3">
    <citation type="journal article" date="2007" name="Proc. Natl. Acad. Sci. U.S.A.">
        <title>Large-scale phosphorylation analysis of mouse liver.</title>
        <authorList>
            <person name="Villen J."/>
            <person name="Beausoleil S.A."/>
            <person name="Gerber S.A."/>
            <person name="Gygi S.P."/>
        </authorList>
    </citation>
    <scope>IDENTIFICATION BY MASS SPECTROMETRY [LARGE SCALE ANALYSIS]</scope>
    <source>
        <tissue>Liver</tissue>
    </source>
</reference>
<reference key="4">
    <citation type="journal article" date="2010" name="Cell">
        <title>A tissue-specific atlas of mouse protein phosphorylation and expression.</title>
        <authorList>
            <person name="Huttlin E.L."/>
            <person name="Jedrychowski M.P."/>
            <person name="Elias J.E."/>
            <person name="Goswami T."/>
            <person name="Rad R."/>
            <person name="Beausoleil S.A."/>
            <person name="Villen J."/>
            <person name="Haas W."/>
            <person name="Sowa M.E."/>
            <person name="Gygi S.P."/>
        </authorList>
    </citation>
    <scope>IDENTIFICATION BY MASS SPECTROMETRY [LARGE SCALE ANALYSIS]</scope>
    <source>
        <tissue>Brain</tissue>
        <tissue>Brown adipose tissue</tissue>
        <tissue>Heart</tissue>
        <tissue>Liver</tissue>
        <tissue>Testis</tissue>
    </source>
</reference>
<feature type="chain" id="PRO_0000089788" description="BLOC-1-related complex subunit 7">
    <location>
        <begin position="1"/>
        <end position="105"/>
    </location>
</feature>
<organism>
    <name type="scientific">Mus musculus</name>
    <name type="common">Mouse</name>
    <dbReference type="NCBI Taxonomy" id="10090"/>
    <lineage>
        <taxon>Eukaryota</taxon>
        <taxon>Metazoa</taxon>
        <taxon>Chordata</taxon>
        <taxon>Craniata</taxon>
        <taxon>Vertebrata</taxon>
        <taxon>Euteleostomi</taxon>
        <taxon>Mammalia</taxon>
        <taxon>Eutheria</taxon>
        <taxon>Euarchontoglires</taxon>
        <taxon>Glires</taxon>
        <taxon>Rodentia</taxon>
        <taxon>Myomorpha</taxon>
        <taxon>Muroidea</taxon>
        <taxon>Muridae</taxon>
        <taxon>Murinae</taxon>
        <taxon>Mus</taxon>
        <taxon>Mus</taxon>
    </lineage>
</organism>
<evidence type="ECO:0000250" key="1">
    <source>
        <dbReference type="UniProtKB" id="Q96B45"/>
    </source>
</evidence>
<evidence type="ECO:0000305" key="2"/>
<evidence type="ECO:0000312" key="3">
    <source>
        <dbReference type="MGI" id="MGI:1913689"/>
    </source>
</evidence>
<keyword id="KW-0458">Lysosome</keyword>
<keyword id="KW-0472">Membrane</keyword>
<keyword id="KW-1185">Reference proteome</keyword>
<accession>Q9CRC6</accession>